<dbReference type="EC" id="3.1.-.-" evidence="3"/>
<dbReference type="EMBL" id="OR700010">
    <property type="protein sequence ID" value="WVR18520.1"/>
    <property type="molecule type" value="mRNA"/>
</dbReference>
<dbReference type="GO" id="GO:0005737">
    <property type="term" value="C:cytoplasm"/>
    <property type="evidence" value="ECO:0000314"/>
    <property type="project" value="UniProtKB"/>
</dbReference>
<dbReference type="GO" id="GO:0005634">
    <property type="term" value="C:nucleus"/>
    <property type="evidence" value="ECO:0000314"/>
    <property type="project" value="UniProtKB"/>
</dbReference>
<dbReference type="GO" id="GO:0016787">
    <property type="term" value="F:hydrolase activity"/>
    <property type="evidence" value="ECO:0000314"/>
    <property type="project" value="UniProtKB"/>
</dbReference>
<dbReference type="GO" id="GO:1902347">
    <property type="term" value="P:response to strigolactone"/>
    <property type="evidence" value="ECO:0000314"/>
    <property type="project" value="UniProtKB"/>
</dbReference>
<dbReference type="FunFam" id="3.40.50.1820:FF:000042">
    <property type="entry name" value="probable strigolactone esterase DAD2"/>
    <property type="match status" value="1"/>
</dbReference>
<dbReference type="Gene3D" id="3.40.50.1820">
    <property type="entry name" value="alpha/beta hydrolase"/>
    <property type="match status" value="1"/>
</dbReference>
<dbReference type="InterPro" id="IPR000073">
    <property type="entry name" value="AB_hydrolase_1"/>
</dbReference>
<dbReference type="InterPro" id="IPR029058">
    <property type="entry name" value="AB_hydrolase_fold"/>
</dbReference>
<dbReference type="PANTHER" id="PTHR43039">
    <property type="entry name" value="ESTERASE-RELATED"/>
    <property type="match status" value="1"/>
</dbReference>
<dbReference type="Pfam" id="PF00561">
    <property type="entry name" value="Abhydrolase_1"/>
    <property type="match status" value="1"/>
</dbReference>
<dbReference type="SUPFAM" id="SSF53474">
    <property type="entry name" value="alpha/beta-Hydrolases"/>
    <property type="match status" value="1"/>
</dbReference>
<sequence>MHQLKKLITVKVIGSGEKTVVLGHGFGTDQSVWKHLVPYLVEDYRVVLYDNMGAGPTNPDYFDFERYASLEGYAYDLLAILEELQIDSCIYLGHSLSSMTGVIASIFRPDLFSKLIMLSASPRFINADDYYGGFEKEDIDQLSQAMDTNYKSWIEGFAPLVIGGDMDSVAVQEFSRTLFNMRPDIALSVFRTIFTFDLRHFLCRVTVPCHIIQSSKDLAVPVAVSEYIHQNLGGKSIVEVISTEGHLPQLSAPEVTIPVLLRHISHDITSNAAP</sequence>
<keyword id="KW-0963">Cytoplasm</keyword>
<keyword id="KW-0378">Hydrolase</keyword>
<keyword id="KW-0539">Nucleus</keyword>
<reference key="1">
    <citation type="journal article" date="2024" name="Science">
        <title>Volatile communication in plants relies on a KAI2-mediated signaling pathway.</title>
        <authorList>
            <person name="Stirling S.A."/>
            <person name="Guercio A.M."/>
            <person name="Partrick R.M."/>
            <person name="Huang X.-Q."/>
            <person name="Bergman M.E."/>
            <person name="Dwivedi V."/>
            <person name="Kortbeek R.W.J."/>
            <person name="Liu Y.-K."/>
            <person name="Sun F."/>
            <person name="Tao W.A."/>
            <person name="Li Y."/>
            <person name="Boachon B."/>
            <person name="Shabek N."/>
            <person name="Dudareva N."/>
        </authorList>
    </citation>
    <scope>NUCLEOTIDE SEQUENCE [MRNA]</scope>
    <scope>FUNCTION</scope>
    <scope>DISRUPTION PHENOTYPE</scope>
    <scope>TISSUE SPECIFICITY</scope>
    <scope>REPRESSION BY VOLATILE ORGANIC COMPOUNDS</scope>
    <scope>ACTIVITY REGULATION</scope>
    <scope>SUBCELLULAR LOCATION</scope>
    <scope>INTERACTION WITH MAX2A AND MAX2B</scope>
    <scope>GENE FAMILY</scope>
    <scope>NOMENCLATURE</scope>
    <source>
        <strain>cv. Mitchell</strain>
    </source>
</reference>
<gene>
    <name evidence="4" type="primary">KAI2IA</name>
</gene>
<comment type="function">
    <text evidence="3">Hydrolase involved in the olfaction of sesquiterpene volatile organic compounds (VOCs) during volatile plant communication in a MAX2 proteins-dependent manner (PubMed:38513014). Acts as a karrikin-insensitive receptor that stereospecifically perceives and binds to (-)-germacrene D, particularly in stigmas, and triggers a signaling cascade influencing plant fitness, as the result of reproductive organ growth-promoting effect; this process involves an interaction with MAX2 proteins (e.g. MAX2A and MAX2B) and the subsequent degradation of SMAX1a, a transcriptional corepressor (PubMed:38513014).</text>
</comment>
<comment type="activity regulation">
    <text evidence="3">Hydrolysis activity toward yoshimulactone green (YLG), a fluorescent agonist to strigolactone receptor, is inhibited by (-)-germacrene D and GR24, a synthetic strigolactone analog.</text>
</comment>
<comment type="subunit">
    <text evidence="3">Interacts with MAX2A and MAX2B in the presence of (-)-germacrene D, thus forming an E3 SCF ubiquitin ligase complex (ASK-cullin-F-box) containing MAX2A or MAX2B and KAI2IA recognizing SMAX1A; this leads to the subsequent degradation of the transcriptional corepressor SMAX1A, thus triggering the activation of a downstream signaling cascade.</text>
</comment>
<comment type="subcellular location">
    <subcellularLocation>
        <location evidence="3">Nucleus</location>
    </subcellularLocation>
    <subcellularLocation>
        <location evidence="3">Cytoplasm</location>
    </subcellularLocation>
</comment>
<comment type="tissue specificity">
    <text evidence="3">Strongly expressed in stigma.</text>
</comment>
<comment type="induction">
    <text evidence="3">Accumulation in the stigmas is inversely proportional to the quantity of volatile organic compounds (VOCs).</text>
</comment>
<comment type="disruption phenotype">
    <text evidence="3">Reduced stigma size with normal terpenoid emission but reduced seeds number per flower (PubMed:38513014). Insensitivity to (-)-germacrene D volatile signal leading to unchanged pistil tube size and lost (-)-germacrene D-mediated SMAX1a degradation (PubMed:38513014).</text>
</comment>
<comment type="similarity">
    <text evidence="5">Belongs to the AB hydrolase superfamily.</text>
</comment>
<feature type="chain" id="PRO_0000461707" description="Karrikin insensitive 2 receptor IA">
    <location>
        <begin position="1"/>
        <end position="274"/>
    </location>
</feature>
<feature type="active site" description="Nucleophile" evidence="1">
    <location>
        <position position="95"/>
    </location>
</feature>
<feature type="active site" evidence="2">
    <location>
        <position position="217"/>
    </location>
</feature>
<feature type="active site" evidence="1">
    <location>
        <position position="246"/>
    </location>
</feature>
<name>KI2IA_PETHY</name>
<protein>
    <recommendedName>
        <fullName evidence="4">Karrikin insensitive 2 receptor IA</fullName>
        <shortName evidence="4">PhKAI2ia</shortName>
        <ecNumber evidence="3">3.1.-.-</ecNumber>
    </recommendedName>
</protein>
<organism>
    <name type="scientific">Petunia hybrida</name>
    <name type="common">Petunia</name>
    <dbReference type="NCBI Taxonomy" id="4102"/>
    <lineage>
        <taxon>Eukaryota</taxon>
        <taxon>Viridiplantae</taxon>
        <taxon>Streptophyta</taxon>
        <taxon>Embryophyta</taxon>
        <taxon>Tracheophyta</taxon>
        <taxon>Spermatophyta</taxon>
        <taxon>Magnoliopsida</taxon>
        <taxon>eudicotyledons</taxon>
        <taxon>Gunneridae</taxon>
        <taxon>Pentapetalae</taxon>
        <taxon>asterids</taxon>
        <taxon>lamiids</taxon>
        <taxon>Solanales</taxon>
        <taxon>Solanaceae</taxon>
        <taxon>Petunioideae</taxon>
        <taxon>Petunia</taxon>
    </lineage>
</organism>
<accession>P0DXI6</accession>
<proteinExistence type="evidence at protein level"/>
<evidence type="ECO:0000250" key="1">
    <source>
        <dbReference type="UniProtKB" id="J9U5U9"/>
    </source>
</evidence>
<evidence type="ECO:0000250" key="2">
    <source>
        <dbReference type="UniProtKB" id="Q10QA5"/>
    </source>
</evidence>
<evidence type="ECO:0000269" key="3">
    <source>
    </source>
</evidence>
<evidence type="ECO:0000303" key="4">
    <source>
    </source>
</evidence>
<evidence type="ECO:0000305" key="5"/>